<comment type="function">
    <text evidence="1">Catalyzes the attachment of glutamate to tRNA(Glu) in a two-step reaction: glutamate is first activated by ATP to form Glu-AMP and then transferred to the acceptor end of tRNA(Glu).</text>
</comment>
<comment type="catalytic activity">
    <reaction evidence="1">
        <text>tRNA(Glu) + L-glutamate + ATP = L-glutamyl-tRNA(Glu) + AMP + diphosphate</text>
        <dbReference type="Rhea" id="RHEA:23540"/>
        <dbReference type="Rhea" id="RHEA-COMP:9663"/>
        <dbReference type="Rhea" id="RHEA-COMP:9680"/>
        <dbReference type="ChEBI" id="CHEBI:29985"/>
        <dbReference type="ChEBI" id="CHEBI:30616"/>
        <dbReference type="ChEBI" id="CHEBI:33019"/>
        <dbReference type="ChEBI" id="CHEBI:78442"/>
        <dbReference type="ChEBI" id="CHEBI:78520"/>
        <dbReference type="ChEBI" id="CHEBI:456215"/>
        <dbReference type="EC" id="6.1.1.17"/>
    </reaction>
</comment>
<comment type="cofactor">
    <cofactor evidence="1">
        <name>Zn(2+)</name>
        <dbReference type="ChEBI" id="CHEBI:29105"/>
    </cofactor>
    <text evidence="1">Binds 1 zinc ion per subunit.</text>
</comment>
<comment type="subunit">
    <text evidence="1">Monomer.</text>
</comment>
<comment type="subcellular location">
    <subcellularLocation>
        <location evidence="1">Cytoplasm</location>
    </subcellularLocation>
</comment>
<comment type="similarity">
    <text evidence="1">Belongs to the class-I aminoacyl-tRNA synthetase family. Glutamate--tRNA ligase type 1 subfamily.</text>
</comment>
<name>SYE_STRAW</name>
<feature type="chain" id="PRO_0000119662" description="Glutamate--tRNA ligase">
    <location>
        <begin position="1"/>
        <end position="504"/>
    </location>
</feature>
<feature type="short sequence motif" description="'HIGH' region" evidence="1">
    <location>
        <begin position="25"/>
        <end position="35"/>
    </location>
</feature>
<feature type="short sequence motif" description="'KMSKS' region" evidence="1">
    <location>
        <begin position="270"/>
        <end position="274"/>
    </location>
</feature>
<feature type="binding site" evidence="1">
    <location>
        <position position="122"/>
    </location>
    <ligand>
        <name>Zn(2+)</name>
        <dbReference type="ChEBI" id="CHEBI:29105"/>
    </ligand>
</feature>
<feature type="binding site" evidence="1">
    <location>
        <position position="124"/>
    </location>
    <ligand>
        <name>Zn(2+)</name>
        <dbReference type="ChEBI" id="CHEBI:29105"/>
    </ligand>
</feature>
<feature type="binding site" evidence="1">
    <location>
        <position position="149"/>
    </location>
    <ligand>
        <name>Zn(2+)</name>
        <dbReference type="ChEBI" id="CHEBI:29105"/>
    </ligand>
</feature>
<feature type="binding site" evidence="1">
    <location>
        <position position="151"/>
    </location>
    <ligand>
        <name>Zn(2+)</name>
        <dbReference type="ChEBI" id="CHEBI:29105"/>
    </ligand>
</feature>
<feature type="binding site" evidence="1">
    <location>
        <position position="273"/>
    </location>
    <ligand>
        <name>ATP</name>
        <dbReference type="ChEBI" id="CHEBI:30616"/>
    </ligand>
</feature>
<gene>
    <name evidence="1" type="primary">gltX</name>
    <name type="ordered locus">SAV_2691</name>
</gene>
<keyword id="KW-0030">Aminoacyl-tRNA synthetase</keyword>
<keyword id="KW-0067">ATP-binding</keyword>
<keyword id="KW-0963">Cytoplasm</keyword>
<keyword id="KW-0436">Ligase</keyword>
<keyword id="KW-0479">Metal-binding</keyword>
<keyword id="KW-0547">Nucleotide-binding</keyword>
<keyword id="KW-0648">Protein biosynthesis</keyword>
<keyword id="KW-1185">Reference proteome</keyword>
<keyword id="KW-0862">Zinc</keyword>
<sequence>MANANSPKSSTPLGEGVPPRVRFCPSPTGNPHVGLVRTALFNWAFARHTGGTFVFRIEDTDAARDSEESYEQLLDSLRWLGFDWDEGPGVGGPHAPYRQSQRMDLYKDVAQKLLDGGYAYHCYCSTEELDTRRDAARAAGKPSGYDGHCRELSAEQKAAYEAEGRTPIVRFRMPDEPITFTDLVRGDITYLPENVPDYGIVRANGAPLYTLVNPVDDALMEITHVLRGEDLLSSTPRQVALYRALIELGIAKSVPEFGHLPYVMGEGNKKLSKRDPQASLNLYRERGFLPEGLLNYLSLLGWSLSADRDIFTIDEMVAAFDVKDVNPNPARFDLKKCEAINADHIRLLDVKDFTERCRPWLKAPFANWAPEDFDEAKWQVIAPYAQSRLKVLSEITDNVDFLFLPEPVFDEASWTKAMKEGSDALLRTAREKLEAADWTSPESLKEAVLAAGEEHGLKLGKAQAPVRVAVTGRTVGLPLFESLEILGKEKTLARVDAALAKLTA</sequence>
<accession>Q82JR3</accession>
<dbReference type="EC" id="6.1.1.17" evidence="1"/>
<dbReference type="EMBL" id="BA000030">
    <property type="protein sequence ID" value="BAC70402.1"/>
    <property type="molecule type" value="Genomic_DNA"/>
</dbReference>
<dbReference type="SMR" id="Q82JR3"/>
<dbReference type="KEGG" id="sma:SAVERM_2691"/>
<dbReference type="eggNOG" id="COG0008">
    <property type="taxonomic scope" value="Bacteria"/>
</dbReference>
<dbReference type="HOGENOM" id="CLU_015768_6_1_11"/>
<dbReference type="Proteomes" id="UP000000428">
    <property type="component" value="Chromosome"/>
</dbReference>
<dbReference type="GO" id="GO:0005829">
    <property type="term" value="C:cytosol"/>
    <property type="evidence" value="ECO:0007669"/>
    <property type="project" value="TreeGrafter"/>
</dbReference>
<dbReference type="GO" id="GO:0005524">
    <property type="term" value="F:ATP binding"/>
    <property type="evidence" value="ECO:0007669"/>
    <property type="project" value="UniProtKB-UniRule"/>
</dbReference>
<dbReference type="GO" id="GO:0004818">
    <property type="term" value="F:glutamate-tRNA ligase activity"/>
    <property type="evidence" value="ECO:0007669"/>
    <property type="project" value="UniProtKB-UniRule"/>
</dbReference>
<dbReference type="GO" id="GO:0000049">
    <property type="term" value="F:tRNA binding"/>
    <property type="evidence" value="ECO:0007669"/>
    <property type="project" value="InterPro"/>
</dbReference>
<dbReference type="GO" id="GO:0008270">
    <property type="term" value="F:zinc ion binding"/>
    <property type="evidence" value="ECO:0007669"/>
    <property type="project" value="UniProtKB-UniRule"/>
</dbReference>
<dbReference type="GO" id="GO:0006424">
    <property type="term" value="P:glutamyl-tRNA aminoacylation"/>
    <property type="evidence" value="ECO:0007669"/>
    <property type="project" value="UniProtKB-UniRule"/>
</dbReference>
<dbReference type="CDD" id="cd00808">
    <property type="entry name" value="GluRS_core"/>
    <property type="match status" value="1"/>
</dbReference>
<dbReference type="FunFam" id="1.10.10.350:FF:000006">
    <property type="entry name" value="Glutamate--tRNA ligase"/>
    <property type="match status" value="1"/>
</dbReference>
<dbReference type="FunFam" id="3.40.50.620:FF:000149">
    <property type="entry name" value="Glutamate--tRNA ligase"/>
    <property type="match status" value="1"/>
</dbReference>
<dbReference type="Gene3D" id="1.10.10.350">
    <property type="match status" value="1"/>
</dbReference>
<dbReference type="Gene3D" id="1.10.8.70">
    <property type="entry name" value="Glutamate-tRNA synthetase, class I, anticodon-binding domain 1"/>
    <property type="match status" value="1"/>
</dbReference>
<dbReference type="Gene3D" id="3.40.50.620">
    <property type="entry name" value="HUPs"/>
    <property type="match status" value="1"/>
</dbReference>
<dbReference type="HAMAP" id="MF_00022">
    <property type="entry name" value="Glu_tRNA_synth_type1"/>
    <property type="match status" value="1"/>
</dbReference>
<dbReference type="InterPro" id="IPR045462">
    <property type="entry name" value="aa-tRNA-synth_I_cd-bd"/>
</dbReference>
<dbReference type="InterPro" id="IPR020751">
    <property type="entry name" value="aa-tRNA-synth_I_codon-bd_sub2"/>
</dbReference>
<dbReference type="InterPro" id="IPR008925">
    <property type="entry name" value="aa_tRNA-synth_I_cd-bd_sf"/>
</dbReference>
<dbReference type="InterPro" id="IPR004527">
    <property type="entry name" value="Glu-tRNA-ligase_bac/mito"/>
</dbReference>
<dbReference type="InterPro" id="IPR020752">
    <property type="entry name" value="Glu-tRNA-synth_I_codon-bd_sub1"/>
</dbReference>
<dbReference type="InterPro" id="IPR000924">
    <property type="entry name" value="Glu/Gln-tRNA-synth"/>
</dbReference>
<dbReference type="InterPro" id="IPR020058">
    <property type="entry name" value="Glu/Gln-tRNA-synth_Ib_cat-dom"/>
</dbReference>
<dbReference type="InterPro" id="IPR049940">
    <property type="entry name" value="GluQ/Sye"/>
</dbReference>
<dbReference type="InterPro" id="IPR033910">
    <property type="entry name" value="GluRS_core"/>
</dbReference>
<dbReference type="InterPro" id="IPR014729">
    <property type="entry name" value="Rossmann-like_a/b/a_fold"/>
</dbReference>
<dbReference type="NCBIfam" id="TIGR00464">
    <property type="entry name" value="gltX_bact"/>
    <property type="match status" value="1"/>
</dbReference>
<dbReference type="PANTHER" id="PTHR43311">
    <property type="entry name" value="GLUTAMATE--TRNA LIGASE"/>
    <property type="match status" value="1"/>
</dbReference>
<dbReference type="PANTHER" id="PTHR43311:SF2">
    <property type="entry name" value="GLUTAMATE--TRNA LIGASE, MITOCHONDRIAL-RELATED"/>
    <property type="match status" value="1"/>
</dbReference>
<dbReference type="Pfam" id="PF19269">
    <property type="entry name" value="Anticodon_2"/>
    <property type="match status" value="1"/>
</dbReference>
<dbReference type="Pfam" id="PF00749">
    <property type="entry name" value="tRNA-synt_1c"/>
    <property type="match status" value="1"/>
</dbReference>
<dbReference type="PRINTS" id="PR00987">
    <property type="entry name" value="TRNASYNTHGLU"/>
</dbReference>
<dbReference type="SUPFAM" id="SSF48163">
    <property type="entry name" value="An anticodon-binding domain of class I aminoacyl-tRNA synthetases"/>
    <property type="match status" value="1"/>
</dbReference>
<dbReference type="SUPFAM" id="SSF52374">
    <property type="entry name" value="Nucleotidylyl transferase"/>
    <property type="match status" value="1"/>
</dbReference>
<reference key="1">
    <citation type="journal article" date="2001" name="Proc. Natl. Acad. Sci. U.S.A.">
        <title>Genome sequence of an industrial microorganism Streptomyces avermitilis: deducing the ability of producing secondary metabolites.</title>
        <authorList>
            <person name="Omura S."/>
            <person name="Ikeda H."/>
            <person name="Ishikawa J."/>
            <person name="Hanamoto A."/>
            <person name="Takahashi C."/>
            <person name="Shinose M."/>
            <person name="Takahashi Y."/>
            <person name="Horikawa H."/>
            <person name="Nakazawa H."/>
            <person name="Osonoe T."/>
            <person name="Kikuchi H."/>
            <person name="Shiba T."/>
            <person name="Sakaki Y."/>
            <person name="Hattori M."/>
        </authorList>
    </citation>
    <scope>NUCLEOTIDE SEQUENCE [LARGE SCALE GENOMIC DNA]</scope>
    <source>
        <strain>ATCC 31267 / DSM 46492 / JCM 5070 / NBRC 14893 / NCIMB 12804 / NRRL 8165 / MA-4680</strain>
    </source>
</reference>
<reference key="2">
    <citation type="journal article" date="2003" name="Nat. Biotechnol.">
        <title>Complete genome sequence and comparative analysis of the industrial microorganism Streptomyces avermitilis.</title>
        <authorList>
            <person name="Ikeda H."/>
            <person name="Ishikawa J."/>
            <person name="Hanamoto A."/>
            <person name="Shinose M."/>
            <person name="Kikuchi H."/>
            <person name="Shiba T."/>
            <person name="Sakaki Y."/>
            <person name="Hattori M."/>
            <person name="Omura S."/>
        </authorList>
    </citation>
    <scope>NUCLEOTIDE SEQUENCE [LARGE SCALE GENOMIC DNA]</scope>
    <source>
        <strain>ATCC 31267 / DSM 46492 / JCM 5070 / NBRC 14893 / NCIMB 12804 / NRRL 8165 / MA-4680</strain>
    </source>
</reference>
<proteinExistence type="inferred from homology"/>
<protein>
    <recommendedName>
        <fullName evidence="1">Glutamate--tRNA ligase</fullName>
        <ecNumber evidence="1">6.1.1.17</ecNumber>
    </recommendedName>
    <alternativeName>
        <fullName evidence="1">Glutamyl-tRNA synthetase</fullName>
        <shortName evidence="1">GluRS</shortName>
    </alternativeName>
</protein>
<evidence type="ECO:0000255" key="1">
    <source>
        <dbReference type="HAMAP-Rule" id="MF_00022"/>
    </source>
</evidence>
<organism>
    <name type="scientific">Streptomyces avermitilis (strain ATCC 31267 / DSM 46492 / JCM 5070 / NBRC 14893 / NCIMB 12804 / NRRL 8165 / MA-4680)</name>
    <dbReference type="NCBI Taxonomy" id="227882"/>
    <lineage>
        <taxon>Bacteria</taxon>
        <taxon>Bacillati</taxon>
        <taxon>Actinomycetota</taxon>
        <taxon>Actinomycetes</taxon>
        <taxon>Kitasatosporales</taxon>
        <taxon>Streptomycetaceae</taxon>
        <taxon>Streptomyces</taxon>
    </lineage>
</organism>